<proteinExistence type="inferred from homology"/>
<accession>Q2Y8S8</accession>
<name>DAPA_NITMU</name>
<reference key="1">
    <citation type="submission" date="2005-08" db="EMBL/GenBank/DDBJ databases">
        <title>Complete sequence of chromosome 1 of Nitrosospira multiformis ATCC 25196.</title>
        <authorList>
            <person name="Copeland A."/>
            <person name="Lucas S."/>
            <person name="Lapidus A."/>
            <person name="Barry K."/>
            <person name="Detter J.C."/>
            <person name="Glavina T."/>
            <person name="Hammon N."/>
            <person name="Israni S."/>
            <person name="Pitluck S."/>
            <person name="Chain P."/>
            <person name="Malfatti S."/>
            <person name="Shin M."/>
            <person name="Vergez L."/>
            <person name="Schmutz J."/>
            <person name="Larimer F."/>
            <person name="Land M."/>
            <person name="Hauser L."/>
            <person name="Kyrpides N."/>
            <person name="Lykidis A."/>
            <person name="Richardson P."/>
        </authorList>
    </citation>
    <scope>NUCLEOTIDE SEQUENCE [LARGE SCALE GENOMIC DNA]</scope>
    <source>
        <strain>ATCC 25196 / NCIMB 11849 / C 71</strain>
    </source>
</reference>
<gene>
    <name evidence="1" type="primary">dapA</name>
    <name type="ordered locus">Nmul_A1540</name>
</gene>
<evidence type="ECO:0000255" key="1">
    <source>
        <dbReference type="HAMAP-Rule" id="MF_00418"/>
    </source>
</evidence>
<evidence type="ECO:0000305" key="2"/>
<comment type="function">
    <text evidence="1">Catalyzes the condensation of (S)-aspartate-beta-semialdehyde [(S)-ASA] and pyruvate to 4-hydroxy-tetrahydrodipicolinate (HTPA).</text>
</comment>
<comment type="catalytic activity">
    <reaction evidence="1">
        <text>L-aspartate 4-semialdehyde + pyruvate = (2S,4S)-4-hydroxy-2,3,4,5-tetrahydrodipicolinate + H2O + H(+)</text>
        <dbReference type="Rhea" id="RHEA:34171"/>
        <dbReference type="ChEBI" id="CHEBI:15361"/>
        <dbReference type="ChEBI" id="CHEBI:15377"/>
        <dbReference type="ChEBI" id="CHEBI:15378"/>
        <dbReference type="ChEBI" id="CHEBI:67139"/>
        <dbReference type="ChEBI" id="CHEBI:537519"/>
        <dbReference type="EC" id="4.3.3.7"/>
    </reaction>
</comment>
<comment type="pathway">
    <text evidence="1">Amino-acid biosynthesis; L-lysine biosynthesis via DAP pathway; (S)-tetrahydrodipicolinate from L-aspartate: step 3/4.</text>
</comment>
<comment type="subunit">
    <text evidence="1">Homotetramer; dimer of dimers.</text>
</comment>
<comment type="subcellular location">
    <subcellularLocation>
        <location evidence="1">Cytoplasm</location>
    </subcellularLocation>
</comment>
<comment type="similarity">
    <text evidence="1">Belongs to the DapA family.</text>
</comment>
<comment type="caution">
    <text evidence="2">Was originally thought to be a dihydrodipicolinate synthase (DHDPS), catalyzing the condensation of (S)-aspartate-beta-semialdehyde [(S)-ASA] and pyruvate to dihydrodipicolinate (DHDP). However, it was shown in E.coli that the product of the enzymatic reaction is not dihydrodipicolinate but in fact (4S)-4-hydroxy-2,3,4,5-tetrahydro-(2S)-dipicolinic acid (HTPA), and that the consecutive dehydration reaction leading to DHDP is not spontaneous but catalyzed by DapB.</text>
</comment>
<dbReference type="EC" id="4.3.3.7" evidence="1"/>
<dbReference type="EMBL" id="CP000103">
    <property type="protein sequence ID" value="ABB74843.1"/>
    <property type="molecule type" value="Genomic_DNA"/>
</dbReference>
<dbReference type="RefSeq" id="WP_011380872.1">
    <property type="nucleotide sequence ID" value="NC_007614.1"/>
</dbReference>
<dbReference type="SMR" id="Q2Y8S8"/>
<dbReference type="STRING" id="323848.Nmul_A1540"/>
<dbReference type="KEGG" id="nmu:Nmul_A1540"/>
<dbReference type="eggNOG" id="COG0329">
    <property type="taxonomic scope" value="Bacteria"/>
</dbReference>
<dbReference type="HOGENOM" id="CLU_049343_7_1_4"/>
<dbReference type="OrthoDB" id="9782828at2"/>
<dbReference type="UniPathway" id="UPA00034">
    <property type="reaction ID" value="UER00017"/>
</dbReference>
<dbReference type="Proteomes" id="UP000002718">
    <property type="component" value="Chromosome"/>
</dbReference>
<dbReference type="GO" id="GO:0005829">
    <property type="term" value="C:cytosol"/>
    <property type="evidence" value="ECO:0007669"/>
    <property type="project" value="TreeGrafter"/>
</dbReference>
<dbReference type="GO" id="GO:0008840">
    <property type="term" value="F:4-hydroxy-tetrahydrodipicolinate synthase activity"/>
    <property type="evidence" value="ECO:0007669"/>
    <property type="project" value="UniProtKB-UniRule"/>
</dbReference>
<dbReference type="GO" id="GO:0019877">
    <property type="term" value="P:diaminopimelate biosynthetic process"/>
    <property type="evidence" value="ECO:0007669"/>
    <property type="project" value="UniProtKB-UniRule"/>
</dbReference>
<dbReference type="GO" id="GO:0009089">
    <property type="term" value="P:lysine biosynthetic process via diaminopimelate"/>
    <property type="evidence" value="ECO:0007669"/>
    <property type="project" value="UniProtKB-UniRule"/>
</dbReference>
<dbReference type="CDD" id="cd00950">
    <property type="entry name" value="DHDPS"/>
    <property type="match status" value="1"/>
</dbReference>
<dbReference type="Gene3D" id="3.20.20.70">
    <property type="entry name" value="Aldolase class I"/>
    <property type="match status" value="1"/>
</dbReference>
<dbReference type="HAMAP" id="MF_00418">
    <property type="entry name" value="DapA"/>
    <property type="match status" value="1"/>
</dbReference>
<dbReference type="InterPro" id="IPR013785">
    <property type="entry name" value="Aldolase_TIM"/>
</dbReference>
<dbReference type="InterPro" id="IPR005263">
    <property type="entry name" value="DapA"/>
</dbReference>
<dbReference type="InterPro" id="IPR002220">
    <property type="entry name" value="DapA-like"/>
</dbReference>
<dbReference type="InterPro" id="IPR020625">
    <property type="entry name" value="Schiff_base-form_aldolases_AS"/>
</dbReference>
<dbReference type="InterPro" id="IPR020624">
    <property type="entry name" value="Schiff_base-form_aldolases_CS"/>
</dbReference>
<dbReference type="NCBIfam" id="TIGR00674">
    <property type="entry name" value="dapA"/>
    <property type="match status" value="1"/>
</dbReference>
<dbReference type="PANTHER" id="PTHR12128:SF66">
    <property type="entry name" value="4-HYDROXY-2-OXOGLUTARATE ALDOLASE, MITOCHONDRIAL"/>
    <property type="match status" value="1"/>
</dbReference>
<dbReference type="PANTHER" id="PTHR12128">
    <property type="entry name" value="DIHYDRODIPICOLINATE SYNTHASE"/>
    <property type="match status" value="1"/>
</dbReference>
<dbReference type="Pfam" id="PF00701">
    <property type="entry name" value="DHDPS"/>
    <property type="match status" value="1"/>
</dbReference>
<dbReference type="PIRSF" id="PIRSF001365">
    <property type="entry name" value="DHDPS"/>
    <property type="match status" value="1"/>
</dbReference>
<dbReference type="PRINTS" id="PR00146">
    <property type="entry name" value="DHPICSNTHASE"/>
</dbReference>
<dbReference type="SMART" id="SM01130">
    <property type="entry name" value="DHDPS"/>
    <property type="match status" value="1"/>
</dbReference>
<dbReference type="SUPFAM" id="SSF51569">
    <property type="entry name" value="Aldolase"/>
    <property type="match status" value="1"/>
</dbReference>
<dbReference type="PROSITE" id="PS00665">
    <property type="entry name" value="DHDPS_1"/>
    <property type="match status" value="1"/>
</dbReference>
<dbReference type="PROSITE" id="PS00666">
    <property type="entry name" value="DHDPS_2"/>
    <property type="match status" value="1"/>
</dbReference>
<feature type="chain" id="PRO_0000340973" description="4-hydroxy-tetrahydrodipicolinate synthase">
    <location>
        <begin position="1"/>
        <end position="300"/>
    </location>
</feature>
<feature type="active site" description="Proton donor/acceptor" evidence="1">
    <location>
        <position position="137"/>
    </location>
</feature>
<feature type="active site" description="Schiff-base intermediate with substrate" evidence="1">
    <location>
        <position position="165"/>
    </location>
</feature>
<feature type="binding site" evidence="1">
    <location>
        <position position="49"/>
    </location>
    <ligand>
        <name>pyruvate</name>
        <dbReference type="ChEBI" id="CHEBI:15361"/>
    </ligand>
</feature>
<feature type="binding site" evidence="1">
    <location>
        <position position="207"/>
    </location>
    <ligand>
        <name>pyruvate</name>
        <dbReference type="ChEBI" id="CHEBI:15361"/>
    </ligand>
</feature>
<feature type="site" description="Part of a proton relay during catalysis" evidence="1">
    <location>
        <position position="48"/>
    </location>
</feature>
<feature type="site" description="Part of a proton relay during catalysis" evidence="1">
    <location>
        <position position="111"/>
    </location>
</feature>
<keyword id="KW-0028">Amino-acid biosynthesis</keyword>
<keyword id="KW-0963">Cytoplasm</keyword>
<keyword id="KW-0220">Diaminopimelate biosynthesis</keyword>
<keyword id="KW-0456">Lyase</keyword>
<keyword id="KW-0457">Lysine biosynthesis</keyword>
<keyword id="KW-1185">Reference proteome</keyword>
<keyword id="KW-0704">Schiff base</keyword>
<sequence length="300" mass="31934">MDNVAIKGSLVAIVTPMHENGELDLERFQSLIDFHVTEGTDGIVVVGTTGESPTVDFEEHHLLIKTAVEQAAGRVPVIAGTGANSTREAIDLSIYAKNAGADASLSVVPYYNKPTQEGLYQHFRAVAEAVDIPQILYNVPGRTVADIANDTVLRLAQIPNIVGIKDATGDIGRGFDLLCRAPEDFAIYSGDDASALALLLLGGHGVISVTANVAPKLMHEMCIAAFAGDLAAARAANRKLLRLHLDLFIEANPIPVKWAVAQMGLIGEGLRLPLTPLSNRYHQTLREAMSEAGIDLAISV</sequence>
<protein>
    <recommendedName>
        <fullName evidence="1">4-hydroxy-tetrahydrodipicolinate synthase</fullName>
        <shortName evidence="1">HTPA synthase</shortName>
        <ecNumber evidence="1">4.3.3.7</ecNumber>
    </recommendedName>
</protein>
<organism>
    <name type="scientific">Nitrosospira multiformis (strain ATCC 25196 / NCIMB 11849 / C 71)</name>
    <dbReference type="NCBI Taxonomy" id="323848"/>
    <lineage>
        <taxon>Bacteria</taxon>
        <taxon>Pseudomonadati</taxon>
        <taxon>Pseudomonadota</taxon>
        <taxon>Betaproteobacteria</taxon>
        <taxon>Nitrosomonadales</taxon>
        <taxon>Nitrosomonadaceae</taxon>
        <taxon>Nitrosospira</taxon>
    </lineage>
</organism>